<sequence>MSNENDDLSPQRRAPRLNERILSSISRRSVAAHPWHDLEIGPEAPSVFNVVIEISKGSKVKYELDKKTGLIKVDRILYSSVVYPQNYGFIPRTLCEDNDPMDVLVLMQEPVLPGCFLRARAIGLMPMIDQGEKDDKIIAVCADDPEYRHYTDIKQLPPHRLAEIRRFFEDYKKNENKDVAVDDFLPPNSAVNAIQYSMDLYAEYILHSLRK</sequence>
<proteinExistence type="evidence at protein level"/>
<gene>
    <name evidence="6" type="primary">PPA1</name>
    <name evidence="7" type="synonym">PPA</name>
</gene>
<dbReference type="EC" id="3.6.1.1" evidence="5"/>
<dbReference type="EMBL" id="Z36894">
    <property type="protein sequence ID" value="CAA85362.1"/>
    <property type="molecule type" value="mRNA"/>
</dbReference>
<dbReference type="PIR" id="T07594">
    <property type="entry name" value="T07594"/>
</dbReference>
<dbReference type="SMR" id="Q43187"/>
<dbReference type="FunCoup" id="Q43187">
    <property type="interactions" value="357"/>
</dbReference>
<dbReference type="STRING" id="4113.Q43187"/>
<dbReference type="PaxDb" id="4113-PGSC0003DMT400012843"/>
<dbReference type="eggNOG" id="KOG1626">
    <property type="taxonomic scope" value="Eukaryota"/>
</dbReference>
<dbReference type="InParanoid" id="Q43187"/>
<dbReference type="Proteomes" id="UP000011115">
    <property type="component" value="Unassembled WGS sequence"/>
</dbReference>
<dbReference type="ExpressionAtlas" id="Q43187">
    <property type="expression patterns" value="baseline and differential"/>
</dbReference>
<dbReference type="GO" id="GO:0005829">
    <property type="term" value="C:cytosol"/>
    <property type="evidence" value="ECO:0000318"/>
    <property type="project" value="GO_Central"/>
</dbReference>
<dbReference type="GO" id="GO:0004427">
    <property type="term" value="F:inorganic diphosphate phosphatase activity"/>
    <property type="evidence" value="ECO:0000314"/>
    <property type="project" value="UniProtKB"/>
</dbReference>
<dbReference type="GO" id="GO:0000287">
    <property type="term" value="F:magnesium ion binding"/>
    <property type="evidence" value="ECO:0000314"/>
    <property type="project" value="UniProtKB"/>
</dbReference>
<dbReference type="GO" id="GO:0071344">
    <property type="term" value="P:diphosphate metabolic process"/>
    <property type="evidence" value="ECO:0000314"/>
    <property type="project" value="UniProtKB"/>
</dbReference>
<dbReference type="GO" id="GO:0006796">
    <property type="term" value="P:phosphate-containing compound metabolic process"/>
    <property type="evidence" value="ECO:0000318"/>
    <property type="project" value="GO_Central"/>
</dbReference>
<dbReference type="CDD" id="cd00412">
    <property type="entry name" value="pyrophosphatase"/>
    <property type="match status" value="1"/>
</dbReference>
<dbReference type="FunFam" id="3.90.80.10:FF:000002">
    <property type="entry name" value="Soluble inorganic pyrophosphatase 4"/>
    <property type="match status" value="1"/>
</dbReference>
<dbReference type="Gene3D" id="3.90.80.10">
    <property type="entry name" value="Inorganic pyrophosphatase"/>
    <property type="match status" value="1"/>
</dbReference>
<dbReference type="HAMAP" id="MF_00209">
    <property type="entry name" value="Inorganic_PPase"/>
    <property type="match status" value="1"/>
</dbReference>
<dbReference type="InterPro" id="IPR008162">
    <property type="entry name" value="Pyrophosphatase"/>
</dbReference>
<dbReference type="InterPro" id="IPR036649">
    <property type="entry name" value="Pyrophosphatase_sf"/>
</dbReference>
<dbReference type="PANTHER" id="PTHR10286">
    <property type="entry name" value="INORGANIC PYROPHOSPHATASE"/>
    <property type="match status" value="1"/>
</dbReference>
<dbReference type="Pfam" id="PF00719">
    <property type="entry name" value="Pyrophosphatase"/>
    <property type="match status" value="1"/>
</dbReference>
<dbReference type="SUPFAM" id="SSF50324">
    <property type="entry name" value="Inorganic pyrophosphatase"/>
    <property type="match status" value="1"/>
</dbReference>
<dbReference type="PROSITE" id="PS00387">
    <property type="entry name" value="PPASE"/>
    <property type="match status" value="1"/>
</dbReference>
<feature type="chain" id="PRO_0000137578" description="Soluble inorganic pyrophosphatase PPA1">
    <location>
        <begin position="1"/>
        <end position="211"/>
    </location>
</feature>
<feature type="active site" description="Proton donor" evidence="1">
    <location>
        <position position="83"/>
    </location>
</feature>
<feature type="binding site" evidence="3">
    <location>
        <position position="61"/>
    </location>
    <ligand>
        <name>substrate</name>
    </ligand>
</feature>
<feature type="binding site" evidence="3">
    <location>
        <position position="75"/>
    </location>
    <ligand>
        <name>substrate</name>
    </ligand>
</feature>
<feature type="binding site" evidence="3">
    <location>
        <position position="87"/>
    </location>
    <ligand>
        <name>substrate</name>
    </ligand>
</feature>
<feature type="binding site" evidence="2">
    <location>
        <position position="97"/>
    </location>
    <ligand>
        <name>Mg(2+)</name>
        <dbReference type="ChEBI" id="CHEBI:18420"/>
        <label>1</label>
    </ligand>
</feature>
<feature type="binding site" evidence="2">
    <location>
        <position position="102"/>
    </location>
    <ligand>
        <name>Mg(2+)</name>
        <dbReference type="ChEBI" id="CHEBI:18420"/>
        <label>1</label>
    </ligand>
</feature>
<feature type="binding site" evidence="2">
    <location>
        <position position="102"/>
    </location>
    <ligand>
        <name>Mg(2+)</name>
        <dbReference type="ChEBI" id="CHEBI:18420"/>
        <label>2</label>
    </ligand>
</feature>
<feature type="binding site" evidence="2">
    <location>
        <position position="134"/>
    </location>
    <ligand>
        <name>Mg(2+)</name>
        <dbReference type="ChEBI" id="CHEBI:18420"/>
        <label>1</label>
    </ligand>
</feature>
<feature type="binding site" evidence="3">
    <location>
        <position position="171"/>
    </location>
    <ligand>
        <name>substrate</name>
    </ligand>
</feature>
<protein>
    <recommendedName>
        <fullName evidence="6">Soluble inorganic pyrophosphatase PPA1</fullName>
        <ecNumber evidence="5">3.6.1.1</ecNumber>
    </recommendedName>
    <alternativeName>
        <fullName evidence="7">Pyrophosphate phospho-hydrolase</fullName>
        <shortName evidence="7">PPase</shortName>
    </alternativeName>
</protein>
<evidence type="ECO:0000250" key="1">
    <source>
        <dbReference type="UniProtKB" id="P00817"/>
    </source>
</evidence>
<evidence type="ECO:0000250" key="2">
    <source>
        <dbReference type="UniProtKB" id="P0A7A9"/>
    </source>
</evidence>
<evidence type="ECO:0000250" key="3">
    <source>
        <dbReference type="UniProtKB" id="P9WI55"/>
    </source>
</evidence>
<evidence type="ECO:0000269" key="4">
    <source>
    </source>
</evidence>
<evidence type="ECO:0000269" key="5">
    <source>
    </source>
</evidence>
<evidence type="ECO:0000303" key="6">
    <source>
    </source>
</evidence>
<evidence type="ECO:0000303" key="7">
    <source>
    </source>
</evidence>
<evidence type="ECO:0000305" key="8"/>
<evidence type="ECO:0000305" key="9">
    <source>
    </source>
</evidence>
<reference key="1">
    <citation type="journal article" date="1995" name="Plant Physiol.">
        <title>Molecular cloning and characterization of a soluble inorganic pyrophosphatase in potato.</title>
        <authorList>
            <person name="du Jardin P."/>
            <person name="Rojas-Beltran J."/>
            <person name="Gebhardt C."/>
            <person name="Brasseur R."/>
        </authorList>
    </citation>
    <scope>NUCLEOTIDE SEQUENCE [MRNA]</scope>
    <scope>FUNCTION</scope>
    <scope>CATALYTIC ACTIVITY</scope>
    <scope>COFACTOR</scope>
    <scope>ACTIVITY REGULATION</scope>
    <source>
        <strain>cv. Desiree</strain>
    </source>
</reference>
<reference key="2">
    <citation type="journal article" date="1999" name="Plant Mol. Biol.">
        <title>Identification of cytosolic Mg2+-dependent soluble inorganic pyrophosphatases in potato and phylogenetic analysis.</title>
        <authorList>
            <person name="Rojas-Beltran J.A."/>
            <person name="Dubois F."/>
            <person name="Mortiaux F."/>
            <person name="Portetelle D."/>
            <person name="Gebhardt C."/>
            <person name="Sangwan R.S."/>
            <person name="du Jardin P."/>
        </authorList>
    </citation>
    <scope>SUBCELLULAR LOCATION</scope>
    <source>
        <strain>cv. Desiree</strain>
    </source>
</reference>
<name>IPYR_SOLTU</name>
<organism>
    <name type="scientific">Solanum tuberosum</name>
    <name type="common">Potato</name>
    <dbReference type="NCBI Taxonomy" id="4113"/>
    <lineage>
        <taxon>Eukaryota</taxon>
        <taxon>Viridiplantae</taxon>
        <taxon>Streptophyta</taxon>
        <taxon>Embryophyta</taxon>
        <taxon>Tracheophyta</taxon>
        <taxon>Spermatophyta</taxon>
        <taxon>Magnoliopsida</taxon>
        <taxon>eudicotyledons</taxon>
        <taxon>Gunneridae</taxon>
        <taxon>Pentapetalae</taxon>
        <taxon>asterids</taxon>
        <taxon>lamiids</taxon>
        <taxon>Solanales</taxon>
        <taxon>Solanaceae</taxon>
        <taxon>Solanoideae</taxon>
        <taxon>Solaneae</taxon>
        <taxon>Solanum</taxon>
    </lineage>
</organism>
<accession>Q43187</accession>
<keyword id="KW-0963">Cytoplasm</keyword>
<keyword id="KW-0378">Hydrolase</keyword>
<keyword id="KW-0460">Magnesium</keyword>
<keyword id="KW-0479">Metal-binding</keyword>
<keyword id="KW-1185">Reference proteome</keyword>
<comment type="function">
    <text evidence="5">Catalyzes the irreversible hydrolysis of pyrophosphate (PPi) to phosphate.</text>
</comment>
<comment type="catalytic activity">
    <reaction evidence="5">
        <text>diphosphate + H2O = 2 phosphate + H(+)</text>
        <dbReference type="Rhea" id="RHEA:24576"/>
        <dbReference type="ChEBI" id="CHEBI:15377"/>
        <dbReference type="ChEBI" id="CHEBI:15378"/>
        <dbReference type="ChEBI" id="CHEBI:33019"/>
        <dbReference type="ChEBI" id="CHEBI:43474"/>
        <dbReference type="EC" id="3.6.1.1"/>
    </reaction>
</comment>
<comment type="cofactor">
    <cofactor evidence="5">
        <name>Mg(2+)</name>
        <dbReference type="ChEBI" id="CHEBI:18420"/>
    </cofactor>
</comment>
<comment type="activity regulation">
    <text evidence="5">Strongly inhibited by Ca(2+).</text>
</comment>
<comment type="subcellular location">
    <subcellularLocation>
        <location evidence="4">Cytoplasm</location>
    </subcellularLocation>
</comment>
<comment type="miscellaneous">
    <text evidence="9">At least 2 separate genes code for soluble pyrophosphatases in potato. This protein is probably encoded by the Ppa1(a) locus located on chromosome 12.</text>
</comment>
<comment type="similarity">
    <text evidence="8">Belongs to the PPase family.</text>
</comment>